<organism>
    <name type="scientific">Salmonella heidelberg (strain SL476)</name>
    <dbReference type="NCBI Taxonomy" id="454169"/>
    <lineage>
        <taxon>Bacteria</taxon>
        <taxon>Pseudomonadati</taxon>
        <taxon>Pseudomonadota</taxon>
        <taxon>Gammaproteobacteria</taxon>
        <taxon>Enterobacterales</taxon>
        <taxon>Enterobacteriaceae</taxon>
        <taxon>Salmonella</taxon>
    </lineage>
</organism>
<accession>B4TDF7</accession>
<sequence>MPIRVLDELPAVNFLREENVFVMTTSRASGQEIRPLKVLILNLMPKKIETENQFLRLLSNSPLQVDIQLLRIDARESRNTPAEHLNNFYCNFDDICDQNFDGLIVTGAPLGLVEFNDVAYWPQIRQVLEWAKDHVTSTLFVCWAVQAALNILYGIPKQTRTDKLSGVYEHHILHPHALLTRGFDDSFLAPHSRYADFPAALIRDYTDLEILAETEEGDAYLFASKDKRIAFVTGHPEYDAHTLAGEYFRDVEAGLNPEVPYNYFPKNDPQNIPRATWRSHGNLLFTNWLNYYVYQITPYDLRHMNPTLD</sequence>
<keyword id="KW-0012">Acyltransferase</keyword>
<keyword id="KW-0028">Amino-acid biosynthesis</keyword>
<keyword id="KW-0963">Cytoplasm</keyword>
<keyword id="KW-0486">Methionine biosynthesis</keyword>
<keyword id="KW-0808">Transferase</keyword>
<protein>
    <recommendedName>
        <fullName evidence="1">Homoserine O-succinyltransferase</fullName>
        <shortName evidence="1">HST</shortName>
        <ecNumber evidence="1">2.3.1.46</ecNumber>
    </recommendedName>
    <alternativeName>
        <fullName evidence="1">Homoserine transsuccinylase</fullName>
        <shortName evidence="1">HTS</shortName>
    </alternativeName>
</protein>
<name>METAS_SALHS</name>
<dbReference type="EC" id="2.3.1.46" evidence="1"/>
<dbReference type="EMBL" id="CP001120">
    <property type="protein sequence ID" value="ACF69032.1"/>
    <property type="molecule type" value="Genomic_DNA"/>
</dbReference>
<dbReference type="SMR" id="B4TDF7"/>
<dbReference type="KEGG" id="seh:SeHA_C4515"/>
<dbReference type="HOGENOM" id="CLU_057851_0_1_6"/>
<dbReference type="UniPathway" id="UPA00051">
    <property type="reaction ID" value="UER00075"/>
</dbReference>
<dbReference type="Proteomes" id="UP000001866">
    <property type="component" value="Chromosome"/>
</dbReference>
<dbReference type="GO" id="GO:0005737">
    <property type="term" value="C:cytoplasm"/>
    <property type="evidence" value="ECO:0007669"/>
    <property type="project" value="UniProtKB-SubCell"/>
</dbReference>
<dbReference type="GO" id="GO:0004414">
    <property type="term" value="F:homoserine O-acetyltransferase activity"/>
    <property type="evidence" value="ECO:0007669"/>
    <property type="project" value="UniProtKB-UniRule"/>
</dbReference>
<dbReference type="GO" id="GO:0008899">
    <property type="term" value="F:homoserine O-succinyltransferase activity"/>
    <property type="evidence" value="ECO:0007669"/>
    <property type="project" value="UniProtKB-EC"/>
</dbReference>
<dbReference type="GO" id="GO:0019281">
    <property type="term" value="P:L-methionine biosynthetic process from homoserine via O-succinyl-L-homoserine and cystathionine"/>
    <property type="evidence" value="ECO:0007669"/>
    <property type="project" value="InterPro"/>
</dbReference>
<dbReference type="CDD" id="cd03131">
    <property type="entry name" value="GATase1_HTS"/>
    <property type="match status" value="1"/>
</dbReference>
<dbReference type="FunFam" id="3.40.50.880:FF:000004">
    <property type="entry name" value="Homoserine O-succinyltransferase"/>
    <property type="match status" value="1"/>
</dbReference>
<dbReference type="Gene3D" id="3.40.50.880">
    <property type="match status" value="1"/>
</dbReference>
<dbReference type="HAMAP" id="MF_00295">
    <property type="entry name" value="MetA_acyltransf"/>
    <property type="match status" value="1"/>
</dbReference>
<dbReference type="InterPro" id="IPR029062">
    <property type="entry name" value="Class_I_gatase-like"/>
</dbReference>
<dbReference type="InterPro" id="IPR005697">
    <property type="entry name" value="HST_MetA"/>
</dbReference>
<dbReference type="InterPro" id="IPR033752">
    <property type="entry name" value="MetA_family"/>
</dbReference>
<dbReference type="NCBIfam" id="TIGR01001">
    <property type="entry name" value="metA"/>
    <property type="match status" value="1"/>
</dbReference>
<dbReference type="PANTHER" id="PTHR20919">
    <property type="entry name" value="HOMOSERINE O-SUCCINYLTRANSFERASE"/>
    <property type="match status" value="1"/>
</dbReference>
<dbReference type="PANTHER" id="PTHR20919:SF0">
    <property type="entry name" value="HOMOSERINE O-SUCCINYLTRANSFERASE"/>
    <property type="match status" value="1"/>
</dbReference>
<dbReference type="Pfam" id="PF04204">
    <property type="entry name" value="HTS"/>
    <property type="match status" value="1"/>
</dbReference>
<dbReference type="PIRSF" id="PIRSF000450">
    <property type="entry name" value="H_ser_succinyltr"/>
    <property type="match status" value="1"/>
</dbReference>
<dbReference type="SUPFAM" id="SSF52317">
    <property type="entry name" value="Class I glutamine amidotransferase-like"/>
    <property type="match status" value="1"/>
</dbReference>
<gene>
    <name evidence="1" type="primary">metAS</name>
    <name type="ordered locus">SeHA_C4515</name>
</gene>
<reference key="1">
    <citation type="journal article" date="2011" name="J. Bacteriol.">
        <title>Comparative genomics of 28 Salmonella enterica isolates: evidence for CRISPR-mediated adaptive sublineage evolution.</title>
        <authorList>
            <person name="Fricke W.F."/>
            <person name="Mammel M.K."/>
            <person name="McDermott P.F."/>
            <person name="Tartera C."/>
            <person name="White D.G."/>
            <person name="Leclerc J.E."/>
            <person name="Ravel J."/>
            <person name="Cebula T.A."/>
        </authorList>
    </citation>
    <scope>NUCLEOTIDE SEQUENCE [LARGE SCALE GENOMIC DNA]</scope>
    <source>
        <strain>SL476</strain>
    </source>
</reference>
<proteinExistence type="inferred from homology"/>
<evidence type="ECO:0000255" key="1">
    <source>
        <dbReference type="HAMAP-Rule" id="MF_00295"/>
    </source>
</evidence>
<comment type="function">
    <text evidence="1">Transfers a succinyl group from succinyl-CoA to L-homoserine, forming succinyl-L-homoserine.</text>
</comment>
<comment type="catalytic activity">
    <reaction evidence="1">
        <text>L-homoserine + succinyl-CoA = O-succinyl-L-homoserine + CoA</text>
        <dbReference type="Rhea" id="RHEA:22008"/>
        <dbReference type="ChEBI" id="CHEBI:57287"/>
        <dbReference type="ChEBI" id="CHEBI:57292"/>
        <dbReference type="ChEBI" id="CHEBI:57476"/>
        <dbReference type="ChEBI" id="CHEBI:57661"/>
        <dbReference type="EC" id="2.3.1.46"/>
    </reaction>
</comment>
<comment type="pathway">
    <text evidence="1">Amino-acid biosynthesis; L-methionine biosynthesis via de novo pathway; O-succinyl-L-homoserine from L-homoserine: step 1/1.</text>
</comment>
<comment type="subunit">
    <text evidence="1">Homodimer.</text>
</comment>
<comment type="subcellular location">
    <subcellularLocation>
        <location evidence="1">Cytoplasm</location>
    </subcellularLocation>
</comment>
<comment type="similarity">
    <text evidence="1">Belongs to the MetA family.</text>
</comment>
<feature type="chain" id="PRO_1000115191" description="Homoserine O-succinyltransferase">
    <location>
        <begin position="1"/>
        <end position="309"/>
    </location>
</feature>
<feature type="active site" description="Acyl-thioester intermediate" evidence="1">
    <location>
        <position position="142"/>
    </location>
</feature>
<feature type="active site" description="Proton acceptor" evidence="1">
    <location>
        <position position="235"/>
    </location>
</feature>
<feature type="active site" evidence="1">
    <location>
        <position position="237"/>
    </location>
</feature>
<feature type="binding site" evidence="1">
    <location>
        <position position="163"/>
    </location>
    <ligand>
        <name>substrate</name>
    </ligand>
</feature>
<feature type="binding site" evidence="1">
    <location>
        <position position="192"/>
    </location>
    <ligand>
        <name>substrate</name>
    </ligand>
</feature>
<feature type="binding site" evidence="1">
    <location>
        <position position="249"/>
    </location>
    <ligand>
        <name>substrate</name>
    </ligand>
</feature>
<feature type="site" description="Important for acyl-CoA specificity" evidence="1">
    <location>
        <position position="111"/>
    </location>
</feature>
<feature type="site" description="Important for substrate specificity" evidence="1">
    <location>
        <position position="192"/>
    </location>
</feature>